<sequence length="147" mass="16258">MWLPTPLGPLWLEVSPLGVRRLEPALYPRGPEAEGALALRVREAVQAYFAGERPDFLDLPLDYTGLSPARLRLYERVRLVPYGRTVSYGALGRELGLSPRAVGAALRACPFFLLVPAHRVIHADGRLGGFQGQEGLKLWLLRFEGAL</sequence>
<keyword id="KW-0227">DNA damage</keyword>
<keyword id="KW-0238">DNA-binding</keyword>
<keyword id="KW-1185">Reference proteome</keyword>
<feature type="chain" id="PRO_0000432551" description="DNA base-flipping protein">
    <location>
        <begin position="1"/>
        <end position="147"/>
    </location>
</feature>
<feature type="site" description="Required for phosphate rotation/nucleotide flipping" evidence="2">
    <location>
        <position position="88"/>
    </location>
</feature>
<feature type="site" description="Arg finger, required for nucleotide flipping" evidence="2">
    <location>
        <position position="100"/>
    </location>
</feature>
<proteinExistence type="evidence at protein level"/>
<accession>Q5SI16</accession>
<gene>
    <name evidence="6" type="ordered locus">TTHA1564</name>
</gene>
<protein>
    <recommendedName>
        <fullName evidence="1">DNA base-flipping protein</fullName>
    </recommendedName>
    <alternativeName>
        <fullName evidence="1">Alkyltransferase-like protein ATL</fullName>
    </alternativeName>
</protein>
<name>ATL_THET8</name>
<comment type="function">
    <text evidence="3 4">Involved in DNA damage recognition. Binds DNA containing O(6)-methylguanine and larger O(6)-alkylguanine adducts (PubMed:18483064, PubMed:23112169). Binds to the damaged base and flips the base out of the DNA duplex into an extrahelical conformation, which allows processing by repair proteins (PubMed:18483064). Also affects the regulation of gene expression in response to alkylation (PubMed:21531768).</text>
</comment>
<comment type="subunit">
    <text evidence="3 4">Interacts with several proteins, including UvrA, UvrD and the three subunits of the RNA polymerase.</text>
</comment>
<comment type="disruption phenotype">
    <text evidence="3">Disruption increases the spontaneous mutation rate.</text>
</comment>
<comment type="similarity">
    <text evidence="5">Belongs to the MGMT family. ATL subfamily.</text>
</comment>
<organism>
    <name type="scientific">Thermus thermophilus (strain ATCC 27634 / DSM 579 / HB8)</name>
    <dbReference type="NCBI Taxonomy" id="300852"/>
    <lineage>
        <taxon>Bacteria</taxon>
        <taxon>Thermotogati</taxon>
        <taxon>Deinococcota</taxon>
        <taxon>Deinococci</taxon>
        <taxon>Thermales</taxon>
        <taxon>Thermaceae</taxon>
        <taxon>Thermus</taxon>
    </lineage>
</organism>
<evidence type="ECO:0000250" key="1">
    <source>
        <dbReference type="UniProtKB" id="P0AFP2"/>
    </source>
</evidence>
<evidence type="ECO:0000250" key="2">
    <source>
        <dbReference type="UniProtKB" id="Q9UTN9"/>
    </source>
</evidence>
<evidence type="ECO:0000269" key="3">
    <source>
    </source>
</evidence>
<evidence type="ECO:0000269" key="4">
    <source>
    </source>
</evidence>
<evidence type="ECO:0000305" key="5"/>
<evidence type="ECO:0000312" key="6">
    <source>
        <dbReference type="EMBL" id="BAD71387.1"/>
    </source>
</evidence>
<dbReference type="EMBL" id="AP008226">
    <property type="protein sequence ID" value="BAD71387.1"/>
    <property type="molecule type" value="Genomic_DNA"/>
</dbReference>
<dbReference type="RefSeq" id="WP_011228767.1">
    <property type="nucleotide sequence ID" value="NC_006461.1"/>
</dbReference>
<dbReference type="RefSeq" id="YP_144830.1">
    <property type="nucleotide sequence ID" value="NC_006461.1"/>
</dbReference>
<dbReference type="SMR" id="Q5SI16"/>
<dbReference type="EnsemblBacteria" id="BAD71387">
    <property type="protein sequence ID" value="BAD71387"/>
    <property type="gene ID" value="BAD71387"/>
</dbReference>
<dbReference type="GeneID" id="3168219"/>
<dbReference type="KEGG" id="ttj:TTHA1564"/>
<dbReference type="PATRIC" id="fig|300852.9.peg.1535"/>
<dbReference type="eggNOG" id="COG0350">
    <property type="taxonomic scope" value="Bacteria"/>
</dbReference>
<dbReference type="HOGENOM" id="CLU_000445_52_2_0"/>
<dbReference type="PhylomeDB" id="Q5SI16"/>
<dbReference type="Proteomes" id="UP000000532">
    <property type="component" value="Chromosome"/>
</dbReference>
<dbReference type="GO" id="GO:0003677">
    <property type="term" value="F:DNA binding"/>
    <property type="evidence" value="ECO:0007669"/>
    <property type="project" value="UniProtKB-KW"/>
</dbReference>
<dbReference type="GO" id="GO:0003908">
    <property type="term" value="F:methylated-DNA-[protein]-cysteine S-methyltransferase activity"/>
    <property type="evidence" value="ECO:0007669"/>
    <property type="project" value="InterPro"/>
</dbReference>
<dbReference type="GO" id="GO:0006281">
    <property type="term" value="P:DNA repair"/>
    <property type="evidence" value="ECO:0007669"/>
    <property type="project" value="InterPro"/>
</dbReference>
<dbReference type="CDD" id="cd06445">
    <property type="entry name" value="ATase"/>
    <property type="match status" value="1"/>
</dbReference>
<dbReference type="Gene3D" id="1.10.10.10">
    <property type="entry name" value="Winged helix-like DNA-binding domain superfamily/Winged helix DNA-binding domain"/>
    <property type="match status" value="1"/>
</dbReference>
<dbReference type="InterPro" id="IPR014048">
    <property type="entry name" value="MethylDNA_cys_MeTrfase_DNA-bd"/>
</dbReference>
<dbReference type="InterPro" id="IPR036217">
    <property type="entry name" value="MethylDNA_cys_MeTrfase_DNAb"/>
</dbReference>
<dbReference type="InterPro" id="IPR036631">
    <property type="entry name" value="MGMT_N_sf"/>
</dbReference>
<dbReference type="InterPro" id="IPR036388">
    <property type="entry name" value="WH-like_DNA-bd_sf"/>
</dbReference>
<dbReference type="NCBIfam" id="TIGR00589">
    <property type="entry name" value="ogt"/>
    <property type="match status" value="1"/>
</dbReference>
<dbReference type="PANTHER" id="PTHR10815">
    <property type="entry name" value="METHYLATED-DNA--PROTEIN-CYSTEINE METHYLTRANSFERASE"/>
    <property type="match status" value="1"/>
</dbReference>
<dbReference type="PANTHER" id="PTHR10815:SF13">
    <property type="entry name" value="METHYLATED-DNA--PROTEIN-CYSTEINE METHYLTRANSFERASE"/>
    <property type="match status" value="1"/>
</dbReference>
<dbReference type="Pfam" id="PF01035">
    <property type="entry name" value="DNA_binding_1"/>
    <property type="match status" value="1"/>
</dbReference>
<dbReference type="SUPFAM" id="SSF53155">
    <property type="entry name" value="Methylated DNA-protein cysteine methyltransferase domain"/>
    <property type="match status" value="1"/>
</dbReference>
<dbReference type="SUPFAM" id="SSF46767">
    <property type="entry name" value="Methylated DNA-protein cysteine methyltransferase, C-terminal domain"/>
    <property type="match status" value="1"/>
</dbReference>
<reference key="1">
    <citation type="submission" date="2004-11" db="EMBL/GenBank/DDBJ databases">
        <title>Complete genome sequence of Thermus thermophilus HB8.</title>
        <authorList>
            <person name="Masui R."/>
            <person name="Kurokawa K."/>
            <person name="Nakagawa N."/>
            <person name="Tokunaga F."/>
            <person name="Koyama Y."/>
            <person name="Shibata T."/>
            <person name="Oshima T."/>
            <person name="Yokoyama S."/>
            <person name="Yasunaga T."/>
            <person name="Kuramitsu S."/>
        </authorList>
    </citation>
    <scope>NUCLEOTIDE SEQUENCE [LARGE SCALE GENOMIC DNA]</scope>
    <source>
        <strain>ATCC 27634 / DSM 579 / HB8</strain>
    </source>
</reference>
<reference key="2">
    <citation type="journal article" date="2008" name="J. Biochem.">
        <title>An O6-methylguanine-DNA methyltransferase-like protein from Thermus thermophilus interacts with a nucleotide excision repair protein.</title>
        <authorList>
            <person name="Morita R."/>
            <person name="Nakagawa N."/>
            <person name="Kuramitsu S."/>
            <person name="Masui R."/>
        </authorList>
    </citation>
    <scope>FUNCTION</scope>
    <scope>SUBUNIT</scope>
    <scope>DISRUPTION PHENOTYPE</scope>
    <source>
        <strain>ATCC 27634 / DSM 579 / HB8</strain>
    </source>
</reference>
<reference key="3">
    <citation type="journal article" date="2011" name="J. Biochem.">
        <title>An alkyltransferase-like protein from Thermus thermophilus HB8 affects the regulation of gene expression in alkylation response.</title>
        <authorList>
            <person name="Morita R."/>
            <person name="Hishinuma H."/>
            <person name="Ohyama H."/>
            <person name="Mega R."/>
            <person name="Ohta T."/>
            <person name="Nakagawa N."/>
            <person name="Agari Y."/>
            <person name="Fukui K."/>
            <person name="Shinkai A."/>
            <person name="Kuramitsu S."/>
            <person name="Masui R."/>
        </authorList>
    </citation>
    <scope>FUNCTION</scope>
    <scope>INTERACTION WITH RNA POLYMERASE</scope>
    <source>
        <strain>ATCC 27634 / DSM 579 / HB8</strain>
    </source>
</reference>
<reference key="4">
    <citation type="journal article" date="2012" name="Proc. Natl. Acad. Sci. U.S.A.">
        <title>Alkyltransferase-like protein (Atl1) distinguishes alkylated guanines for DNA repair using cation-pi interactions.</title>
        <authorList>
            <person name="Wilkinson O.J."/>
            <person name="Latypov V."/>
            <person name="Tubbs J.L."/>
            <person name="Millington C.L."/>
            <person name="Morita R."/>
            <person name="Blackburn H."/>
            <person name="Marriott A."/>
            <person name="McGown G."/>
            <person name="Thorncroft M."/>
            <person name="Watson A.J."/>
            <person name="Connolly B.A."/>
            <person name="Grasby J.A."/>
            <person name="Masui R."/>
            <person name="Hunter C.A."/>
            <person name="Tainer J.A."/>
            <person name="Margison G.P."/>
            <person name="Williams D.M."/>
        </authorList>
    </citation>
    <scope>FUNCTION</scope>
</reference>